<protein>
    <recommendedName>
        <fullName evidence="1">Non-structural protein 3</fullName>
        <shortName evidence="1">NSP3</shortName>
    </recommendedName>
    <alternativeName>
        <fullName evidence="1">NCVP4</fullName>
    </alternativeName>
    <alternativeName>
        <fullName evidence="1">Non-structural RNA-binding protein 34</fullName>
        <shortName evidence="1">NS34</shortName>
    </alternativeName>
</protein>
<organism>
    <name type="scientific">Rotavirus A (strain RVA/Cow/United States/NCDV-Lincoln/1969/G6P6[1])</name>
    <name type="common">RV-A</name>
    <name type="synonym">Rotavirus A (strain Nebraska calf diarrhea virus)</name>
    <dbReference type="NCBI Taxonomy" id="36439"/>
    <lineage>
        <taxon>Viruses</taxon>
        <taxon>Riboviria</taxon>
        <taxon>Orthornavirae</taxon>
        <taxon>Duplornaviricota</taxon>
        <taxon>Resentoviricetes</taxon>
        <taxon>Reovirales</taxon>
        <taxon>Sedoreoviridae</taxon>
        <taxon>Rotavirus</taxon>
        <taxon>Rotavirus A</taxon>
    </lineage>
</organism>
<organismHost>
    <name type="scientific">Bos taurus</name>
    <name type="common">Bovine</name>
    <dbReference type="NCBI Taxonomy" id="9913"/>
</organismHost>
<dbReference type="EMBL" id="X81429">
    <property type="protein sequence ID" value="CAA57188.1"/>
    <property type="molecule type" value="mRNA"/>
</dbReference>
<dbReference type="PIR" id="S51709">
    <property type="entry name" value="S51709"/>
</dbReference>
<dbReference type="SMR" id="Q65701"/>
<dbReference type="GO" id="GO:0030430">
    <property type="term" value="C:host cell cytoplasm"/>
    <property type="evidence" value="ECO:0007669"/>
    <property type="project" value="UniProtKB-SubCell"/>
</dbReference>
<dbReference type="GO" id="GO:0003723">
    <property type="term" value="F:RNA binding"/>
    <property type="evidence" value="ECO:0007669"/>
    <property type="project" value="UniProtKB-UniRule"/>
</dbReference>
<dbReference type="GO" id="GO:0006417">
    <property type="term" value="P:regulation of translation"/>
    <property type="evidence" value="ECO:0007669"/>
    <property type="project" value="UniProtKB-UniRule"/>
</dbReference>
<dbReference type="CDD" id="cd20714">
    <property type="entry name" value="NSP3_rotavirus"/>
    <property type="match status" value="1"/>
</dbReference>
<dbReference type="Gene3D" id="3.30.70.1610">
    <property type="match status" value="1"/>
</dbReference>
<dbReference type="Gene3D" id="1.20.5.970">
    <property type="entry name" value="Nonstructural RNA-binding protein"/>
    <property type="match status" value="1"/>
</dbReference>
<dbReference type="Gene3D" id="6.10.280.20">
    <property type="entry name" value="Rotavirus non-structural protein NSP3, N-terminal domain"/>
    <property type="match status" value="1"/>
</dbReference>
<dbReference type="HAMAP" id="MF_04094">
    <property type="entry name" value="ROTA_A_NSP3"/>
    <property type="match status" value="1"/>
</dbReference>
<dbReference type="HAMAP" id="MF_04090">
    <property type="entry name" value="ROTA_NSP3"/>
    <property type="match status" value="1"/>
</dbReference>
<dbReference type="InterPro" id="IPR042519">
    <property type="entry name" value="NSP3_N_rotavirus"/>
</dbReference>
<dbReference type="InterPro" id="IPR036082">
    <property type="entry name" value="NSP3_sf"/>
</dbReference>
<dbReference type="InterPro" id="IPR002873">
    <property type="entry name" value="Rotavirus_NSP3"/>
</dbReference>
<dbReference type="Pfam" id="PF01665">
    <property type="entry name" value="Rota_NSP3"/>
    <property type="match status" value="1"/>
</dbReference>
<dbReference type="SUPFAM" id="SSF69903">
    <property type="entry name" value="NSP3 homodimer"/>
    <property type="match status" value="1"/>
</dbReference>
<dbReference type="SUPFAM" id="SSF58030">
    <property type="entry name" value="Rotavirus nonstructural proteins"/>
    <property type="match status" value="1"/>
</dbReference>
<name>NSP3_ROTBN</name>
<accession>Q65701</accession>
<sequence>MSKMESTQQMASSIINTSFEAAVVAATSTLELMGIQYDYNEVYTRVKSKFDYVMDDSGVKNNLLGKAATYDQALNGKFGSAARNRNWMADTRTTARLDEDVNKLRMMLSSKGIDQKMRVLNACFNVKRVPGKSSSIIKCTRLMRDKIERGEVEVDDSFVEEKMEVDTIDWKSRYEQLEKRFESLKQRVNEKYTSWVQKAKKVNENMYSLQNVISQQQSQIADLQNYCNKLEVDLQNKISSLVSSVEWYLKSMELPDEIKTDIEQQLNSIDVINPINAIDDFESLIRNIILDYDRIFLMFKGLMRQCNYEYTYE</sequence>
<evidence type="ECO:0000255" key="1">
    <source>
        <dbReference type="HAMAP-Rule" id="MF_04094"/>
    </source>
</evidence>
<feature type="chain" id="PRO_0000369446" description="Non-structural protein 3">
    <location>
        <begin position="1"/>
        <end position="313"/>
    </location>
</feature>
<feature type="region of interest" description="RNA-binding" evidence="1">
    <location>
        <begin position="1"/>
        <end position="149"/>
    </location>
</feature>
<feature type="region of interest" description="Dimerization" evidence="1">
    <location>
        <begin position="150"/>
        <end position="206"/>
    </location>
</feature>
<feature type="region of interest" description="Interaction with host ZC3H7B" evidence="1">
    <location>
        <begin position="170"/>
        <end position="234"/>
    </location>
</feature>
<feature type="region of interest" description="Interaction with host EIF4G1" evidence="1">
    <location>
        <begin position="208"/>
        <end position="313"/>
    </location>
</feature>
<feature type="coiled-coil region" evidence="1">
    <location>
        <begin position="166"/>
        <end position="237"/>
    </location>
</feature>
<keyword id="KW-0175">Coiled coil</keyword>
<keyword id="KW-1035">Host cytoplasm</keyword>
<keyword id="KW-0945">Host-virus interaction</keyword>
<keyword id="KW-0694">RNA-binding</keyword>
<keyword id="KW-0810">Translation regulation</keyword>
<proteinExistence type="evidence at transcript level"/>
<comment type="function">
    <text evidence="1">Plays an important role in stimulating the translation of viral mRNAs. These mRNAs are capped but not polyadenylated, instead terminating in a conserved sequence 'GACC' at the 3' that is recognized by NSP3, which competes with host PABPC1 for EIF4G1 binding. The interaction between NSP3 and host EIF4G1 stabilizes the EIF4E-EIF4G1 interaction, thereby facilitating the initiation of capped mRNA translation.</text>
</comment>
<comment type="subunit">
    <text evidence="1">Homodimer. Interacts (via the coiled-coil region) with host ZC3H7B (via LD motif). Interacts with host EIF4G1.</text>
</comment>
<comment type="subcellular location">
    <subcellularLocation>
        <location evidence="1">Host cytoplasm</location>
    </subcellularLocation>
</comment>
<comment type="similarity">
    <text evidence="1">Belongs to the rotavirus NSP3 family.</text>
</comment>
<reference key="1">
    <citation type="journal article" date="1995" name="Virology">
        <title>Comparative nucleotide and amino acid sequence analysis of the sequence-specific RNA-binding rotavirus nonstructural protein NSP3.</title>
        <authorList>
            <person name="Rao C.D."/>
            <person name="Das M."/>
            <person name="Ilango P."/>
            <person name="Lalwani R."/>
            <person name="Rao B.S."/>
            <person name="Gowda K."/>
        </authorList>
    </citation>
    <scope>NUCLEOTIDE SEQUENCE [MRNA]</scope>
</reference>